<gene>
    <name type="primary">ANO4</name>
    <name type="synonym">TMEM16D</name>
</gene>
<reference key="1">
    <citation type="journal article" date="2004" name="Nat. Genet.">
        <title>Complete sequencing and characterization of 21,243 full-length human cDNAs.</title>
        <authorList>
            <person name="Ota T."/>
            <person name="Suzuki Y."/>
            <person name="Nishikawa T."/>
            <person name="Otsuki T."/>
            <person name="Sugiyama T."/>
            <person name="Irie R."/>
            <person name="Wakamatsu A."/>
            <person name="Hayashi K."/>
            <person name="Sato H."/>
            <person name="Nagai K."/>
            <person name="Kimura K."/>
            <person name="Makita H."/>
            <person name="Sekine M."/>
            <person name="Obayashi M."/>
            <person name="Nishi T."/>
            <person name="Shibahara T."/>
            <person name="Tanaka T."/>
            <person name="Ishii S."/>
            <person name="Yamamoto J."/>
            <person name="Saito K."/>
            <person name="Kawai Y."/>
            <person name="Isono Y."/>
            <person name="Nakamura Y."/>
            <person name="Nagahari K."/>
            <person name="Murakami K."/>
            <person name="Yasuda T."/>
            <person name="Iwayanagi T."/>
            <person name="Wagatsuma M."/>
            <person name="Shiratori A."/>
            <person name="Sudo H."/>
            <person name="Hosoiri T."/>
            <person name="Kaku Y."/>
            <person name="Kodaira H."/>
            <person name="Kondo H."/>
            <person name="Sugawara M."/>
            <person name="Takahashi M."/>
            <person name="Kanda K."/>
            <person name="Yokoi T."/>
            <person name="Furuya T."/>
            <person name="Kikkawa E."/>
            <person name="Omura Y."/>
            <person name="Abe K."/>
            <person name="Kamihara K."/>
            <person name="Katsuta N."/>
            <person name="Sato K."/>
            <person name="Tanikawa M."/>
            <person name="Yamazaki M."/>
            <person name="Ninomiya K."/>
            <person name="Ishibashi T."/>
            <person name="Yamashita H."/>
            <person name="Murakawa K."/>
            <person name="Fujimori K."/>
            <person name="Tanai H."/>
            <person name="Kimata M."/>
            <person name="Watanabe M."/>
            <person name="Hiraoka S."/>
            <person name="Chiba Y."/>
            <person name="Ishida S."/>
            <person name="Ono Y."/>
            <person name="Takiguchi S."/>
            <person name="Watanabe S."/>
            <person name="Yosida M."/>
            <person name="Hotuta T."/>
            <person name="Kusano J."/>
            <person name="Kanehori K."/>
            <person name="Takahashi-Fujii A."/>
            <person name="Hara H."/>
            <person name="Tanase T.-O."/>
            <person name="Nomura Y."/>
            <person name="Togiya S."/>
            <person name="Komai F."/>
            <person name="Hara R."/>
            <person name="Takeuchi K."/>
            <person name="Arita M."/>
            <person name="Imose N."/>
            <person name="Musashino K."/>
            <person name="Yuuki H."/>
            <person name="Oshima A."/>
            <person name="Sasaki N."/>
            <person name="Aotsuka S."/>
            <person name="Yoshikawa Y."/>
            <person name="Matsunawa H."/>
            <person name="Ichihara T."/>
            <person name="Shiohata N."/>
            <person name="Sano S."/>
            <person name="Moriya S."/>
            <person name="Momiyama H."/>
            <person name="Satoh N."/>
            <person name="Takami S."/>
            <person name="Terashima Y."/>
            <person name="Suzuki O."/>
            <person name="Nakagawa S."/>
            <person name="Senoh A."/>
            <person name="Mizoguchi H."/>
            <person name="Goto Y."/>
            <person name="Shimizu F."/>
            <person name="Wakebe H."/>
            <person name="Hishigaki H."/>
            <person name="Watanabe T."/>
            <person name="Sugiyama A."/>
            <person name="Takemoto M."/>
            <person name="Kawakami B."/>
            <person name="Yamazaki M."/>
            <person name="Watanabe K."/>
            <person name="Kumagai A."/>
            <person name="Itakura S."/>
            <person name="Fukuzumi Y."/>
            <person name="Fujimori Y."/>
            <person name="Komiyama M."/>
            <person name="Tashiro H."/>
            <person name="Tanigami A."/>
            <person name="Fujiwara T."/>
            <person name="Ono T."/>
            <person name="Yamada K."/>
            <person name="Fujii Y."/>
            <person name="Ozaki K."/>
            <person name="Hirao M."/>
            <person name="Ohmori Y."/>
            <person name="Kawabata A."/>
            <person name="Hikiji T."/>
            <person name="Kobatake N."/>
            <person name="Inagaki H."/>
            <person name="Ikema Y."/>
            <person name="Okamoto S."/>
            <person name="Okitani R."/>
            <person name="Kawakami T."/>
            <person name="Noguchi S."/>
            <person name="Itoh T."/>
            <person name="Shigeta K."/>
            <person name="Senba T."/>
            <person name="Matsumura K."/>
            <person name="Nakajima Y."/>
            <person name="Mizuno T."/>
            <person name="Morinaga M."/>
            <person name="Sasaki M."/>
            <person name="Togashi T."/>
            <person name="Oyama M."/>
            <person name="Hata H."/>
            <person name="Watanabe M."/>
            <person name="Komatsu T."/>
            <person name="Mizushima-Sugano J."/>
            <person name="Satoh T."/>
            <person name="Shirai Y."/>
            <person name="Takahashi Y."/>
            <person name="Nakagawa K."/>
            <person name="Okumura K."/>
            <person name="Nagase T."/>
            <person name="Nomura N."/>
            <person name="Kikuchi H."/>
            <person name="Masuho Y."/>
            <person name="Yamashita R."/>
            <person name="Nakai K."/>
            <person name="Yada T."/>
            <person name="Nakamura Y."/>
            <person name="Ohara O."/>
            <person name="Isogai T."/>
            <person name="Sugano S."/>
        </authorList>
    </citation>
    <scope>NUCLEOTIDE SEQUENCE [LARGE SCALE MRNA] (ISOFORMS 2 AND 3)</scope>
    <source>
        <tissue>Brain</tissue>
        <tissue>Prostate</tissue>
    </source>
</reference>
<reference key="2">
    <citation type="journal article" date="2004" name="Genome Res.">
        <title>The status, quality, and expansion of the NIH full-length cDNA project: the Mammalian Gene Collection (MGC).</title>
        <authorList>
            <consortium name="The MGC Project Team"/>
        </authorList>
    </citation>
    <scope>NUCLEOTIDE SEQUENCE [LARGE SCALE MRNA] (ISOFORM 1)</scope>
</reference>
<reference key="3">
    <citation type="journal article" date="2003" name="Int. J. Oncol.">
        <title>FLJ10261 gene, located within the CCND1-EMS1 locus on human chromosome 11q13, encodes the eight-transmembrane protein homologous to C12orf3, C11orf25 and FLJ34272 gene products.</title>
        <authorList>
            <person name="Katoh M."/>
            <person name="Katoh M."/>
        </authorList>
    </citation>
    <scope>IDENTIFICATION</scope>
</reference>
<reference key="4">
    <citation type="journal article" date="2011" name="Acta Pharmacol. Sin.">
        <title>Physiological roles and diseases of Tmem16/Anoctamin proteins: are they all chloride channels?</title>
        <authorList>
            <person name="Duran C."/>
            <person name="Hartzell H.C."/>
        </authorList>
    </citation>
    <scope>REVIEW</scope>
</reference>
<reference key="5">
    <citation type="journal article" date="2011" name="Pflugers Arch.">
        <title>Anoctamins.</title>
        <authorList>
            <person name="Kunzelmann K."/>
            <person name="Tian Y."/>
            <person name="Martins J.R."/>
            <person name="Faria D."/>
            <person name="Kongsuphol P."/>
            <person name="Ousingsawat J."/>
            <person name="Thevenod F."/>
            <person name="Roussa E."/>
            <person name="Rock J."/>
            <person name="Schreiber R."/>
        </authorList>
    </citation>
    <scope>REVIEW</scope>
</reference>
<reference key="6">
    <citation type="journal article" date="2012" name="Exp. Physiol.">
        <title>The anoctamin (TMEM16) gene family: calcium-activated chloride channels come of age.</title>
        <authorList>
            <person name="Winpenny J.P."/>
            <person name="Gray M.A."/>
        </authorList>
    </citation>
    <scope>REVIEW</scope>
</reference>
<reference key="7">
    <citation type="journal article" date="2012" name="J. Cell Sci.">
        <title>Anoctamins are a family of Ca2+ activated Cl- channels.</title>
        <authorList>
            <person name="Tian Y."/>
            <person name="Schreiber R."/>
            <person name="Kunzelmann K."/>
        </authorList>
    </citation>
    <scope>SUBCELLULAR LOCATION</scope>
</reference>
<comment type="function">
    <text evidence="1">Has calcium-dependent phospholipid scramblase activity; scrambles phosphatidylserine, phosphatidylcholine and galactosylceramide (By similarity). Does not exhibit calcium-activated chloride channel (CaCC) activity (By similarity).</text>
</comment>
<comment type="catalytic activity">
    <reaction evidence="1">
        <text>a 1,2-diacyl-sn-glycero-3-phospho-L-serine(in) = a 1,2-diacyl-sn-glycero-3-phospho-L-serine(out)</text>
        <dbReference type="Rhea" id="RHEA:38663"/>
        <dbReference type="ChEBI" id="CHEBI:57262"/>
    </reaction>
    <physiologicalReaction direction="left-to-right" evidence="1">
        <dbReference type="Rhea" id="RHEA:38664"/>
    </physiologicalReaction>
</comment>
<comment type="catalytic activity">
    <reaction evidence="1">
        <text>a beta-D-galactosyl-(1&lt;-&gt;1')-N-acylsphing-4-enine(out) = a beta-D-galactosyl-(1&lt;-&gt;1')-N-acylsphing-4-enine(in)</text>
        <dbReference type="Rhea" id="RHEA:38899"/>
        <dbReference type="ChEBI" id="CHEBI:18390"/>
    </reaction>
    <physiologicalReaction direction="left-to-right" evidence="1">
        <dbReference type="Rhea" id="RHEA:38900"/>
    </physiologicalReaction>
</comment>
<comment type="catalytic activity">
    <reaction evidence="1">
        <text>a 1,2-diacyl-sn-glycero-3-phosphocholine(in) = a 1,2-diacyl-sn-glycero-3-phosphocholine(out)</text>
        <dbReference type="Rhea" id="RHEA:38571"/>
        <dbReference type="ChEBI" id="CHEBI:57643"/>
    </reaction>
    <physiologicalReaction direction="right-to-left" evidence="1">
        <dbReference type="Rhea" id="RHEA:38573"/>
    </physiologicalReaction>
</comment>
<comment type="subcellular location">
    <subcellularLocation>
        <location evidence="4">Cell membrane</location>
        <topology evidence="4">Multi-pass membrane protein</topology>
    </subcellularLocation>
    <text evidence="1">Shows an intracellular localization.</text>
</comment>
<comment type="alternative products">
    <event type="alternative splicing"/>
    <isoform>
        <id>Q32M45-1</id>
        <name>1</name>
        <sequence type="displayed"/>
    </isoform>
    <isoform>
        <id>Q32M45-2</id>
        <name>2</name>
        <sequence type="described" ref="VSP_025742"/>
    </isoform>
    <isoform>
        <id>Q32M45-3</id>
        <name>3</name>
        <sequence type="described" ref="VSP_025741 VSP_025743"/>
    </isoform>
</comment>
<comment type="miscellaneous">
    <text>The term 'anoctamin' was coined because these channels are anion selective and have eight (OCT) transmembrane segments. There is some dissatisfaction in the field with the Ano nomenclature because it is not certain that all the members of this family are anion channels or have the 8-transmembrane topology.</text>
</comment>
<comment type="similarity">
    <text evidence="6">Belongs to the anoctamin family.</text>
</comment>
<comment type="sequence caution" evidence="6">
    <conflict type="erroneous initiation">
        <sequence resource="EMBL-CDS" id="BAC03688"/>
    </conflict>
    <text>Truncated N-terminus.</text>
</comment>
<protein>
    <recommendedName>
        <fullName>Anoctamin-4</fullName>
    </recommendedName>
    <alternativeName>
        <fullName>Transmembrane protein 16D</fullName>
    </alternativeName>
</protein>
<name>ANO4_HUMAN</name>
<evidence type="ECO:0000250" key="1">
    <source>
        <dbReference type="UniProtKB" id="Q8C5H1"/>
    </source>
</evidence>
<evidence type="ECO:0000255" key="2"/>
<evidence type="ECO:0000256" key="3">
    <source>
        <dbReference type="SAM" id="MobiDB-lite"/>
    </source>
</evidence>
<evidence type="ECO:0000269" key="4">
    <source>
    </source>
</evidence>
<evidence type="ECO:0000303" key="5">
    <source>
    </source>
</evidence>
<evidence type="ECO:0000305" key="6"/>
<accession>Q32M45</accession>
<accession>Q8NAJ0</accession>
<accession>Q8NB39</accession>
<accession>Q8NB53</accession>
<dbReference type="EMBL" id="AK091540">
    <property type="protein sequence ID" value="BAC03688.1"/>
    <property type="status" value="ALT_INIT"/>
    <property type="molecule type" value="mRNA"/>
</dbReference>
<dbReference type="EMBL" id="AK091591">
    <property type="protein sequence ID" value="BAC03704.1"/>
    <property type="molecule type" value="mRNA"/>
</dbReference>
<dbReference type="EMBL" id="AK092596">
    <property type="protein sequence ID" value="BAC03924.1"/>
    <property type="molecule type" value="mRNA"/>
</dbReference>
<dbReference type="EMBL" id="BC109308">
    <property type="protein sequence ID" value="AAI09309.1"/>
    <property type="molecule type" value="mRNA"/>
</dbReference>
<dbReference type="CCDS" id="CCDS31884.1">
    <molecule id="Q32M45-2"/>
</dbReference>
<dbReference type="CCDS" id="CCDS66445.1">
    <molecule id="Q32M45-1"/>
</dbReference>
<dbReference type="RefSeq" id="NP_001273544.1">
    <molecule id="Q32M45-1"/>
    <property type="nucleotide sequence ID" value="NM_001286615.2"/>
</dbReference>
<dbReference type="RefSeq" id="NP_001273545.1">
    <molecule id="Q32M45-1"/>
    <property type="nucleotide sequence ID" value="NM_001286616.1"/>
</dbReference>
<dbReference type="RefSeq" id="NP_849148.2">
    <molecule id="Q32M45-2"/>
    <property type="nucleotide sequence ID" value="NM_178826.4"/>
</dbReference>
<dbReference type="RefSeq" id="XP_011536216.1">
    <property type="nucleotide sequence ID" value="XM_011537914.2"/>
</dbReference>
<dbReference type="RefSeq" id="XP_016874297.1">
    <property type="nucleotide sequence ID" value="XM_017018808.1"/>
</dbReference>
<dbReference type="RefSeq" id="XP_016874298.1">
    <property type="nucleotide sequence ID" value="XM_017018809.1"/>
</dbReference>
<dbReference type="RefSeq" id="XP_016874299.1">
    <property type="nucleotide sequence ID" value="XM_017018810.1"/>
</dbReference>
<dbReference type="SMR" id="Q32M45"/>
<dbReference type="BioGRID" id="125740">
    <property type="interactions" value="19"/>
</dbReference>
<dbReference type="FunCoup" id="Q32M45">
    <property type="interactions" value="597"/>
</dbReference>
<dbReference type="IntAct" id="Q32M45">
    <property type="interactions" value="17"/>
</dbReference>
<dbReference type="STRING" id="9606.ENSP00000376703"/>
<dbReference type="TCDB" id="1.A.17.1.29">
    <property type="family name" value="the calcium-dependent chloride channel (ca-clc) family"/>
</dbReference>
<dbReference type="GlyCosmos" id="Q32M45">
    <property type="glycosylation" value="4 sites, No reported glycans"/>
</dbReference>
<dbReference type="GlyGen" id="Q32M45">
    <property type="glycosylation" value="4 sites"/>
</dbReference>
<dbReference type="iPTMnet" id="Q32M45"/>
<dbReference type="PhosphoSitePlus" id="Q32M45"/>
<dbReference type="BioMuta" id="ANO4"/>
<dbReference type="DMDM" id="121942141"/>
<dbReference type="MassIVE" id="Q32M45"/>
<dbReference type="PaxDb" id="9606-ENSP00000376703"/>
<dbReference type="PeptideAtlas" id="Q32M45"/>
<dbReference type="ProteomicsDB" id="61589">
    <molecule id="Q32M45-1"/>
</dbReference>
<dbReference type="ProteomicsDB" id="61590">
    <molecule id="Q32M45-2"/>
</dbReference>
<dbReference type="ProteomicsDB" id="61591">
    <molecule id="Q32M45-3"/>
</dbReference>
<dbReference type="Antibodypedia" id="66428">
    <property type="antibodies" value="88 antibodies from 13 providers"/>
</dbReference>
<dbReference type="DNASU" id="121601"/>
<dbReference type="Ensembl" id="ENST00000392977.8">
    <molecule id="Q32M45-1"/>
    <property type="protein sequence ID" value="ENSP00000376703.3"/>
    <property type="gene ID" value="ENSG00000151572.18"/>
</dbReference>
<dbReference type="Ensembl" id="ENST00000392979.7">
    <molecule id="Q32M45-2"/>
    <property type="protein sequence ID" value="ENSP00000376705.3"/>
    <property type="gene ID" value="ENSG00000151572.18"/>
</dbReference>
<dbReference type="Ensembl" id="ENST00000570509.4">
    <property type="protein sequence ID" value="ENSP00000471431.2"/>
    <property type="gene ID" value="ENSG00000262139.9"/>
</dbReference>
<dbReference type="Ensembl" id="ENST00000573650.8">
    <property type="protein sequence ID" value="ENSP00000469449.2"/>
    <property type="gene ID" value="ENSG00000262139.9"/>
</dbReference>
<dbReference type="Ensembl" id="ENST00000575847.8">
    <property type="protein sequence ID" value="ENSP00000470039.2"/>
    <property type="gene ID" value="ENSG00000262139.9"/>
</dbReference>
<dbReference type="GeneID" id="121601"/>
<dbReference type="KEGG" id="hsa:121601"/>
<dbReference type="MANE-Select" id="ENST00000392977.8">
    <property type="protein sequence ID" value="ENSP00000376703.3"/>
    <property type="RefSeq nucleotide sequence ID" value="NM_001286615.2"/>
    <property type="RefSeq protein sequence ID" value="NP_001273544.1"/>
</dbReference>
<dbReference type="UCSC" id="uc001thw.3">
    <molecule id="Q32M45-1"/>
    <property type="organism name" value="human"/>
</dbReference>
<dbReference type="AGR" id="HGNC:23837"/>
<dbReference type="CTD" id="121601"/>
<dbReference type="DisGeNET" id="121601"/>
<dbReference type="GeneCards" id="ANO4"/>
<dbReference type="HGNC" id="HGNC:23837">
    <property type="gene designation" value="ANO4"/>
</dbReference>
<dbReference type="HPA" id="ENSG00000151572">
    <property type="expression patterns" value="Tissue enhanced (adrenal gland, cervix, seminal vesicle)"/>
</dbReference>
<dbReference type="MalaCards" id="ANO4"/>
<dbReference type="MIM" id="610111">
    <property type="type" value="gene"/>
</dbReference>
<dbReference type="neXtProt" id="NX_Q32M45"/>
<dbReference type="OpenTargets" id="ENSG00000151572"/>
<dbReference type="PharmGKB" id="PA164715582"/>
<dbReference type="VEuPathDB" id="HostDB:ENSG00000151572"/>
<dbReference type="eggNOG" id="KOG2514">
    <property type="taxonomic scope" value="Eukaryota"/>
</dbReference>
<dbReference type="GeneTree" id="ENSGT00940000158600"/>
<dbReference type="HOGENOM" id="CLU_006685_1_3_1"/>
<dbReference type="InParanoid" id="Q32M45"/>
<dbReference type="OMA" id="SQAFHPL"/>
<dbReference type="OrthoDB" id="9512290at2759"/>
<dbReference type="PAN-GO" id="Q32M45">
    <property type="GO annotations" value="3 GO annotations based on evolutionary models"/>
</dbReference>
<dbReference type="PhylomeDB" id="Q32M45"/>
<dbReference type="TreeFam" id="TF314265"/>
<dbReference type="PathwayCommons" id="Q32M45"/>
<dbReference type="Reactome" id="R-HSA-2672351">
    <property type="pathway name" value="Stimuli-sensing channels"/>
</dbReference>
<dbReference type="Reactome" id="R-HSA-9733458">
    <property type="pathway name" value="Induction of Cell-Cell Fusion"/>
</dbReference>
<dbReference type="SignaLink" id="Q32M45"/>
<dbReference type="BioGRID-ORCS" id="121601">
    <property type="hits" value="15 hits in 1140 CRISPR screens"/>
</dbReference>
<dbReference type="ChiTaRS" id="ANO4">
    <property type="organism name" value="human"/>
</dbReference>
<dbReference type="GenomeRNAi" id="121601"/>
<dbReference type="Pharos" id="Q32M45">
    <property type="development level" value="Tbio"/>
</dbReference>
<dbReference type="PRO" id="PR:Q32M45"/>
<dbReference type="Proteomes" id="UP000005640">
    <property type="component" value="Chromosome 12"/>
</dbReference>
<dbReference type="RNAct" id="Q32M45">
    <property type="molecule type" value="protein"/>
</dbReference>
<dbReference type="Bgee" id="ENSG00000151572">
    <property type="expression patterns" value="Expressed in corpus callosum and 93 other cell types or tissues"/>
</dbReference>
<dbReference type="ExpressionAtlas" id="Q32M45">
    <property type="expression patterns" value="baseline and differential"/>
</dbReference>
<dbReference type="GO" id="GO:0005886">
    <property type="term" value="C:plasma membrane"/>
    <property type="evidence" value="ECO:0000314"/>
    <property type="project" value="UniProtKB"/>
</dbReference>
<dbReference type="GO" id="GO:0005254">
    <property type="term" value="F:chloride channel activity"/>
    <property type="evidence" value="ECO:0000304"/>
    <property type="project" value="Reactome"/>
</dbReference>
<dbReference type="GO" id="GO:0005229">
    <property type="term" value="F:intracellularly calcium-gated chloride channel activity"/>
    <property type="evidence" value="ECO:0000314"/>
    <property type="project" value="UniProtKB"/>
</dbReference>
<dbReference type="GO" id="GO:0017128">
    <property type="term" value="F:phospholipid scramblase activity"/>
    <property type="evidence" value="ECO:0007669"/>
    <property type="project" value="Ensembl"/>
</dbReference>
<dbReference type="GO" id="GO:0046983">
    <property type="term" value="F:protein dimerization activity"/>
    <property type="evidence" value="ECO:0007669"/>
    <property type="project" value="InterPro"/>
</dbReference>
<dbReference type="GO" id="GO:0061591">
    <property type="term" value="P:calcium activated galactosylceramide scrambling"/>
    <property type="evidence" value="ECO:0007669"/>
    <property type="project" value="Ensembl"/>
</dbReference>
<dbReference type="GO" id="GO:0061590">
    <property type="term" value="P:calcium activated phosphatidylcholine scrambling"/>
    <property type="evidence" value="ECO:0007669"/>
    <property type="project" value="Ensembl"/>
</dbReference>
<dbReference type="GO" id="GO:0061589">
    <property type="term" value="P:calcium activated phosphatidylserine scrambling"/>
    <property type="evidence" value="ECO:0007669"/>
    <property type="project" value="Ensembl"/>
</dbReference>
<dbReference type="GO" id="GO:1902476">
    <property type="term" value="P:chloride transmembrane transport"/>
    <property type="evidence" value="ECO:0000314"/>
    <property type="project" value="UniProtKB"/>
</dbReference>
<dbReference type="GO" id="GO:0051649">
    <property type="term" value="P:establishment of localization in cell"/>
    <property type="evidence" value="ECO:0007669"/>
    <property type="project" value="Ensembl"/>
</dbReference>
<dbReference type="GO" id="GO:0034220">
    <property type="term" value="P:monoatomic ion transmembrane transport"/>
    <property type="evidence" value="ECO:0000304"/>
    <property type="project" value="Reactome"/>
</dbReference>
<dbReference type="InterPro" id="IPR032394">
    <property type="entry name" value="Anoct_dimer"/>
</dbReference>
<dbReference type="InterPro" id="IPR007632">
    <property type="entry name" value="Anoctamin"/>
</dbReference>
<dbReference type="InterPro" id="IPR049452">
    <property type="entry name" value="Anoctamin_TM"/>
</dbReference>
<dbReference type="PANTHER" id="PTHR12308">
    <property type="entry name" value="ANOCTAMIN"/>
    <property type="match status" value="1"/>
</dbReference>
<dbReference type="PANTHER" id="PTHR12308:SF28">
    <property type="entry name" value="ANOCTAMIN-4"/>
    <property type="match status" value="1"/>
</dbReference>
<dbReference type="Pfam" id="PF16178">
    <property type="entry name" value="Anoct_dimer"/>
    <property type="match status" value="1"/>
</dbReference>
<dbReference type="Pfam" id="PF04547">
    <property type="entry name" value="Anoctamin"/>
    <property type="match status" value="1"/>
</dbReference>
<proteinExistence type="evidence at protein level"/>
<organism>
    <name type="scientific">Homo sapiens</name>
    <name type="common">Human</name>
    <dbReference type="NCBI Taxonomy" id="9606"/>
    <lineage>
        <taxon>Eukaryota</taxon>
        <taxon>Metazoa</taxon>
        <taxon>Chordata</taxon>
        <taxon>Craniata</taxon>
        <taxon>Vertebrata</taxon>
        <taxon>Euteleostomi</taxon>
        <taxon>Mammalia</taxon>
        <taxon>Eutheria</taxon>
        <taxon>Euarchontoglires</taxon>
        <taxon>Primates</taxon>
        <taxon>Haplorrhini</taxon>
        <taxon>Catarrhini</taxon>
        <taxon>Hominidae</taxon>
        <taxon>Homo</taxon>
    </lineage>
</organism>
<feature type="chain" id="PRO_0000288650" description="Anoctamin-4">
    <location>
        <begin position="1"/>
        <end position="955"/>
    </location>
</feature>
<feature type="topological domain" description="Extracellular" evidence="2">
    <location>
        <begin position="1"/>
        <end position="352"/>
    </location>
</feature>
<feature type="transmembrane region" description="Helical" evidence="2">
    <location>
        <begin position="353"/>
        <end position="373"/>
    </location>
</feature>
<feature type="topological domain" description="Cytoplasmic" evidence="2">
    <location>
        <begin position="374"/>
        <end position="424"/>
    </location>
</feature>
<feature type="transmembrane region" description="Helical" evidence="2">
    <location>
        <begin position="425"/>
        <end position="445"/>
    </location>
</feature>
<feature type="topological domain" description="Extracellular" evidence="2">
    <location>
        <begin position="446"/>
        <end position="505"/>
    </location>
</feature>
<feature type="transmembrane region" description="Helical" evidence="2">
    <location>
        <begin position="506"/>
        <end position="526"/>
    </location>
</feature>
<feature type="topological domain" description="Cytoplasmic" evidence="2">
    <location>
        <begin position="527"/>
        <end position="547"/>
    </location>
</feature>
<feature type="transmembrane region" description="Helical" evidence="2">
    <location>
        <begin position="548"/>
        <end position="568"/>
    </location>
</feature>
<feature type="topological domain" description="Extracellular" evidence="2">
    <location>
        <begin position="569"/>
        <end position="595"/>
    </location>
</feature>
<feature type="transmembrane region" description="Helical" evidence="2">
    <location>
        <begin position="596"/>
        <end position="616"/>
    </location>
</feature>
<feature type="topological domain" description="Cytoplasmic" evidence="2">
    <location>
        <begin position="617"/>
        <end position="715"/>
    </location>
</feature>
<feature type="transmembrane region" description="Helical" evidence="2">
    <location>
        <begin position="716"/>
        <end position="736"/>
    </location>
</feature>
<feature type="topological domain" description="Extracellular" evidence="2">
    <location>
        <begin position="737"/>
        <end position="768"/>
    </location>
</feature>
<feature type="transmembrane region" description="Helical" evidence="2">
    <location>
        <begin position="769"/>
        <end position="789"/>
    </location>
</feature>
<feature type="topological domain" description="Cytoplasmic" evidence="2">
    <location>
        <begin position="790"/>
        <end position="885"/>
    </location>
</feature>
<feature type="transmembrane region" description="Helical" evidence="2">
    <location>
        <begin position="886"/>
        <end position="906"/>
    </location>
</feature>
<feature type="topological domain" description="Extracellular" evidence="2">
    <location>
        <begin position="907"/>
        <end position="955"/>
    </location>
</feature>
<feature type="region of interest" description="Disordered" evidence="3">
    <location>
        <begin position="72"/>
        <end position="100"/>
    </location>
</feature>
<feature type="glycosylation site" description="N-linked (GlcNAc...) asparagine" evidence="2">
    <location>
        <position position="83"/>
    </location>
</feature>
<feature type="glycosylation site" description="N-linked (GlcNAc...) asparagine" evidence="2">
    <location>
        <position position="105"/>
    </location>
</feature>
<feature type="glycosylation site" description="N-linked (GlcNAc...) asparagine" evidence="2">
    <location>
        <position position="257"/>
    </location>
</feature>
<feature type="glycosylation site" description="N-linked (GlcNAc...) asparagine" evidence="2">
    <location>
        <position position="288"/>
    </location>
</feature>
<feature type="splice variant" id="VSP_025741" description="In isoform 3." evidence="5">
    <location>
        <begin position="1"/>
        <end position="433"/>
    </location>
</feature>
<feature type="splice variant" id="VSP_025742" description="In isoform 2." evidence="5">
    <original>EGGVDLQGYQLDMQILPDGPKSDVDFSEILNAIQEM</original>
    <variation>V</variation>
    <location>
        <begin position="19"/>
        <end position="54"/>
    </location>
</feature>
<feature type="splice variant" id="VSP_025743" description="In isoform 3." evidence="5">
    <location>
        <begin position="466"/>
        <end position="512"/>
    </location>
</feature>
<feature type="sequence variant" id="VAR_032453" description="In dbSNP:rs34162417.">
    <original>G</original>
    <variation>A</variation>
    <location>
        <position position="115"/>
    </location>
</feature>
<feature type="sequence conflict" description="In Ref. 1; BAC03704." evidence="6" ref="1">
    <original>F</original>
    <variation>L</variation>
    <location>
        <position position="209"/>
    </location>
</feature>
<sequence length="955" mass="111462">MEASSSGITNGKTKVFHPEGGVDLQGYQLDMQILPDGPKSDVDFSEILNAIQEMAKDVNILFDELEAVSSPCKDDDSLLHPGNLTSTSDDASRLEAGGETVPERNKSNGLYFRDGKCRIDYILVYRKSNPQTEKREVFERNIRAEGLQMEKESSLINSDIIFVKLHAPWEVLGRYAEQMNVRMPFRRKIYYLPRRYKFMSRIDKQISRFRRWLPKKPMRLDKETLPDLEENDCYTAPFSQQRIHHFIIHNKETFFNNATRSRIVHHILQRIKYEEGKNKIGLNRLLTNGSYEAAFPLHEGSYRSKNSIRTHGAENHRHLLYECWASWGVWYKYQPLDLVRRYFGEKIGLYFAWLGWYTGMLFPAAFIGLFVFLYGVTTLDHSQVSKEVCQATDIIMCPVCDKYCPFMRLSDSCVYAKVTHLFDNGATVFFAVFMAVWATVFLEFWKRRRAVIAYDWDLIDWEEEEEEIRPQFEAKYSKKERMNPISGKPEPYQAFTDKCSRLIVSASGIFFMICVVIAAVFGIVIYRVVTVSTFAAFKWALIRNNSQVATTGTAVCINFCIIMLLNVLYEKVALLLTNLEQPRTESEWENSFTLKMFLFQFVNLNSSTFYIAFFLGRFTGHPGAYLRLINRWRLEECHPSGCLIDLCMQMGIIMVLKQTWNNFMELGYPLIQNWWTRRKVRQEHGPERKISFPQWEKDYNLQPMNAYGLFDEYLEMILQFGFTTIFVAAFPLAPLLALLNNIIEIRLDAYKFVTQWRRPLASRAKDIGIWYGILEGIGILSVITNAFVIAITSDFIPRLVYAYKYGPCAGQGEAGQKCMVGYVNASLSVFRISDFENRSEPESDGSEFSGTPLKYCRYRDYRDPPHSLVPYGYTLQFWHVLAARLAFIIVFEHLVFCIKHLISYLIPDLPKDLRDRMRREKYLIQEMMYEAELERLQKERKERKKNGKAHHNEWP</sequence>
<keyword id="KW-0025">Alternative splicing</keyword>
<keyword id="KW-1003">Cell membrane</keyword>
<keyword id="KW-0325">Glycoprotein</keyword>
<keyword id="KW-0445">Lipid transport</keyword>
<keyword id="KW-0472">Membrane</keyword>
<keyword id="KW-1267">Proteomics identification</keyword>
<keyword id="KW-1185">Reference proteome</keyword>
<keyword id="KW-0812">Transmembrane</keyword>
<keyword id="KW-1133">Transmembrane helix</keyword>
<keyword id="KW-0813">Transport</keyword>